<protein>
    <recommendedName>
        <fullName evidence="1">Transcriptional repressor NrdR</fullName>
    </recommendedName>
</protein>
<dbReference type="EMBL" id="AM884176">
    <property type="protein sequence ID" value="CAP04102.1"/>
    <property type="molecule type" value="Genomic_DNA"/>
</dbReference>
<dbReference type="RefSeq" id="WP_009871758.1">
    <property type="nucleotide sequence ID" value="NC_010287.1"/>
</dbReference>
<dbReference type="RefSeq" id="YP_001654735.1">
    <property type="nucleotide sequence ID" value="NC_010287.1"/>
</dbReference>
<dbReference type="SMR" id="B0B7X6"/>
<dbReference type="KEGG" id="ctb:CTL0663"/>
<dbReference type="PATRIC" id="fig|471472.4.peg.713"/>
<dbReference type="HOGENOM" id="CLU_108412_0_0_0"/>
<dbReference type="Proteomes" id="UP001154402">
    <property type="component" value="Chromosome"/>
</dbReference>
<dbReference type="GO" id="GO:0005524">
    <property type="term" value="F:ATP binding"/>
    <property type="evidence" value="ECO:0007669"/>
    <property type="project" value="UniProtKB-KW"/>
</dbReference>
<dbReference type="GO" id="GO:0003677">
    <property type="term" value="F:DNA binding"/>
    <property type="evidence" value="ECO:0007669"/>
    <property type="project" value="UniProtKB-KW"/>
</dbReference>
<dbReference type="GO" id="GO:0008270">
    <property type="term" value="F:zinc ion binding"/>
    <property type="evidence" value="ECO:0007669"/>
    <property type="project" value="UniProtKB-UniRule"/>
</dbReference>
<dbReference type="GO" id="GO:0045892">
    <property type="term" value="P:negative regulation of DNA-templated transcription"/>
    <property type="evidence" value="ECO:0007669"/>
    <property type="project" value="UniProtKB-UniRule"/>
</dbReference>
<dbReference type="HAMAP" id="MF_00440">
    <property type="entry name" value="NrdR"/>
    <property type="match status" value="1"/>
</dbReference>
<dbReference type="InterPro" id="IPR005144">
    <property type="entry name" value="ATP-cone_dom"/>
</dbReference>
<dbReference type="InterPro" id="IPR055173">
    <property type="entry name" value="NrdR-like_N"/>
</dbReference>
<dbReference type="InterPro" id="IPR003796">
    <property type="entry name" value="RNR_NrdR-like"/>
</dbReference>
<dbReference type="NCBIfam" id="TIGR00244">
    <property type="entry name" value="transcriptional regulator NrdR"/>
    <property type="match status" value="1"/>
</dbReference>
<dbReference type="PANTHER" id="PTHR30455">
    <property type="entry name" value="TRANSCRIPTIONAL REPRESSOR NRDR"/>
    <property type="match status" value="1"/>
</dbReference>
<dbReference type="PANTHER" id="PTHR30455:SF2">
    <property type="entry name" value="TRANSCRIPTIONAL REPRESSOR NRDR"/>
    <property type="match status" value="1"/>
</dbReference>
<dbReference type="Pfam" id="PF03477">
    <property type="entry name" value="ATP-cone"/>
    <property type="match status" value="1"/>
</dbReference>
<dbReference type="Pfam" id="PF22811">
    <property type="entry name" value="Zn_ribbon_NrdR"/>
    <property type="match status" value="1"/>
</dbReference>
<dbReference type="PROSITE" id="PS51161">
    <property type="entry name" value="ATP_CONE"/>
    <property type="match status" value="1"/>
</dbReference>
<feature type="chain" id="PRO_1000124479" description="Transcriptional repressor NrdR">
    <location>
        <begin position="1"/>
        <end position="154"/>
    </location>
</feature>
<feature type="domain" description="ATP-cone" evidence="1">
    <location>
        <begin position="48"/>
        <end position="138"/>
    </location>
</feature>
<feature type="zinc finger region" evidence="1">
    <location>
        <begin position="3"/>
        <end position="34"/>
    </location>
</feature>
<comment type="function">
    <text evidence="1">Negatively regulates transcription of bacterial ribonucleotide reductase nrd genes and operons by binding to NrdR-boxes.</text>
</comment>
<comment type="cofactor">
    <cofactor evidence="1">
        <name>Zn(2+)</name>
        <dbReference type="ChEBI" id="CHEBI:29105"/>
    </cofactor>
    <text evidence="1">Binds 1 zinc ion.</text>
</comment>
<comment type="similarity">
    <text evidence="1">Belongs to the NrdR family.</text>
</comment>
<keyword id="KW-0067">ATP-binding</keyword>
<keyword id="KW-0238">DNA-binding</keyword>
<keyword id="KW-0479">Metal-binding</keyword>
<keyword id="KW-0547">Nucleotide-binding</keyword>
<keyword id="KW-0678">Repressor</keyword>
<keyword id="KW-0804">Transcription</keyword>
<keyword id="KW-0805">Transcription regulation</keyword>
<keyword id="KW-0862">Zinc</keyword>
<keyword id="KW-0863">Zinc-finger</keyword>
<evidence type="ECO:0000255" key="1">
    <source>
        <dbReference type="HAMAP-Rule" id="MF_00440"/>
    </source>
</evidence>
<name>NRDR_CHLT2</name>
<sequence length="154" mass="17660">MLCPFCNHGELKVIDSRNAPESNAIKRRRECLRCSQRFTTFETVELTVQVLKRDGRYENFQESKLVNGLKAASSHTRIGQEQVQAIASNIKQDLLGKQNREISTKEIGELVMKYLKKADMIAYIRFACVYRRFKDVGELMEVLLSATPDGEKQT</sequence>
<gene>
    <name evidence="1" type="primary">nrdR</name>
    <name type="ordered locus">CTL0663</name>
</gene>
<proteinExistence type="inferred from homology"/>
<organism>
    <name type="scientific">Chlamydia trachomatis serovar L2 (strain ATCC VR-902B / DSM 19102 / 434/Bu)</name>
    <dbReference type="NCBI Taxonomy" id="471472"/>
    <lineage>
        <taxon>Bacteria</taxon>
        <taxon>Pseudomonadati</taxon>
        <taxon>Chlamydiota</taxon>
        <taxon>Chlamydiia</taxon>
        <taxon>Chlamydiales</taxon>
        <taxon>Chlamydiaceae</taxon>
        <taxon>Chlamydia/Chlamydophila group</taxon>
        <taxon>Chlamydia</taxon>
    </lineage>
</organism>
<reference key="1">
    <citation type="journal article" date="2008" name="Genome Res.">
        <title>Chlamydia trachomatis: genome sequence analysis of lymphogranuloma venereum isolates.</title>
        <authorList>
            <person name="Thomson N.R."/>
            <person name="Holden M.T.G."/>
            <person name="Carder C."/>
            <person name="Lennard N."/>
            <person name="Lockey S.J."/>
            <person name="Marsh P."/>
            <person name="Skipp P."/>
            <person name="O'Connor C.D."/>
            <person name="Goodhead I."/>
            <person name="Norbertzcak H."/>
            <person name="Harris B."/>
            <person name="Ormond D."/>
            <person name="Rance R."/>
            <person name="Quail M.A."/>
            <person name="Parkhill J."/>
            <person name="Stephens R.S."/>
            <person name="Clarke I.N."/>
        </authorList>
    </citation>
    <scope>NUCLEOTIDE SEQUENCE [LARGE SCALE GENOMIC DNA]</scope>
    <source>
        <strain>ATCC VR-902B / DSM 19102 / 434/Bu</strain>
    </source>
</reference>
<accession>B0B7X6</accession>